<feature type="chain" id="PRO_0000094364" description="Elongation factor P">
    <location>
        <begin position="1"/>
        <end position="188"/>
    </location>
</feature>
<feature type="modified residue" description="N6-(3,6-diaminohexanoyl)-5-hydroxylysine" evidence="1">
    <location>
        <position position="34"/>
    </location>
</feature>
<proteinExistence type="inferred from homology"/>
<evidence type="ECO:0000255" key="1">
    <source>
        <dbReference type="HAMAP-Rule" id="MF_00141"/>
    </source>
</evidence>
<name>EFP_VIBCH</name>
<comment type="function">
    <text evidence="1">Involved in peptide bond synthesis. Alleviates ribosome stalling that occurs when 3 or more consecutive Pro residues or the sequence PPG is present in a protein, possibly by augmenting the peptidyl transferase activity of the ribosome. Modification of Lys-34 is required for alleviation.</text>
</comment>
<comment type="pathway">
    <text evidence="1">Protein biosynthesis; polypeptide chain elongation.</text>
</comment>
<comment type="subcellular location">
    <subcellularLocation>
        <location evidence="1">Cytoplasm</location>
    </subcellularLocation>
</comment>
<comment type="PTM">
    <text evidence="1">May be beta-lysylated on the epsilon-amino group of Lys-34 by the combined action of EpmA and EpmB, and then hydroxylated on the C5 position of the same residue by EpmC (if this protein is present). Lysylation is critical for the stimulatory effect of EF-P on peptide-bond formation. The lysylation moiety may extend toward the peptidyltransferase center and stabilize the terminal 3-CCA end of the tRNA. Hydroxylation of the C5 position on Lys-34 may allow additional potential stabilizing hydrogen-bond interactions with the P-tRNA.</text>
</comment>
<comment type="similarity">
    <text evidence="1">Belongs to the elongation factor P family.</text>
</comment>
<accession>Q9KNS1</accession>
<reference key="1">
    <citation type="journal article" date="2000" name="Nature">
        <title>DNA sequence of both chromosomes of the cholera pathogen Vibrio cholerae.</title>
        <authorList>
            <person name="Heidelberg J.F."/>
            <person name="Eisen J.A."/>
            <person name="Nelson W.C."/>
            <person name="Clayton R.A."/>
            <person name="Gwinn M.L."/>
            <person name="Dodson R.J."/>
            <person name="Haft D.H."/>
            <person name="Hickey E.K."/>
            <person name="Peterson J.D."/>
            <person name="Umayam L.A."/>
            <person name="Gill S.R."/>
            <person name="Nelson K.E."/>
            <person name="Read T.D."/>
            <person name="Tettelin H."/>
            <person name="Richardson D.L."/>
            <person name="Ermolaeva M.D."/>
            <person name="Vamathevan J.J."/>
            <person name="Bass S."/>
            <person name="Qin H."/>
            <person name="Dragoi I."/>
            <person name="Sellers P."/>
            <person name="McDonald L.A."/>
            <person name="Utterback T.R."/>
            <person name="Fleischmann R.D."/>
            <person name="Nierman W.C."/>
            <person name="White O."/>
            <person name="Salzberg S.L."/>
            <person name="Smith H.O."/>
            <person name="Colwell R.R."/>
            <person name="Mekalanos J.J."/>
            <person name="Venter J.C."/>
            <person name="Fraser C.M."/>
        </authorList>
    </citation>
    <scope>NUCLEOTIDE SEQUENCE [LARGE SCALE GENOMIC DNA]</scope>
    <source>
        <strain>ATCC 39315 / El Tor Inaba N16961</strain>
    </source>
</reference>
<keyword id="KW-0963">Cytoplasm</keyword>
<keyword id="KW-0251">Elongation factor</keyword>
<keyword id="KW-0379">Hydroxylation</keyword>
<keyword id="KW-0648">Protein biosynthesis</keyword>
<keyword id="KW-1185">Reference proteome</keyword>
<dbReference type="EMBL" id="AE003852">
    <property type="protein sequence ID" value="AAF95801.1"/>
    <property type="molecule type" value="Genomic_DNA"/>
</dbReference>
<dbReference type="PIR" id="F82047">
    <property type="entry name" value="F82047"/>
</dbReference>
<dbReference type="RefSeq" id="NP_232288.1">
    <property type="nucleotide sequence ID" value="NC_002505.1"/>
</dbReference>
<dbReference type="RefSeq" id="WP_000246893.1">
    <property type="nucleotide sequence ID" value="NZ_LT906614.1"/>
</dbReference>
<dbReference type="SMR" id="Q9KNS1"/>
<dbReference type="STRING" id="243277.VC_2660"/>
<dbReference type="DNASU" id="2615677"/>
<dbReference type="EnsemblBacteria" id="AAF95801">
    <property type="protein sequence ID" value="AAF95801"/>
    <property type="gene ID" value="VC_2660"/>
</dbReference>
<dbReference type="GeneID" id="88785215"/>
<dbReference type="KEGG" id="vch:VC_2660"/>
<dbReference type="PATRIC" id="fig|243277.26.peg.2536"/>
<dbReference type="eggNOG" id="COG0231">
    <property type="taxonomic scope" value="Bacteria"/>
</dbReference>
<dbReference type="HOGENOM" id="CLU_074944_0_0_6"/>
<dbReference type="UniPathway" id="UPA00345"/>
<dbReference type="Proteomes" id="UP000000584">
    <property type="component" value="Chromosome 1"/>
</dbReference>
<dbReference type="GO" id="GO:0005737">
    <property type="term" value="C:cytoplasm"/>
    <property type="evidence" value="ECO:0000318"/>
    <property type="project" value="GO_Central"/>
</dbReference>
<dbReference type="GO" id="GO:0003746">
    <property type="term" value="F:translation elongation factor activity"/>
    <property type="evidence" value="ECO:0000318"/>
    <property type="project" value="GO_Central"/>
</dbReference>
<dbReference type="GO" id="GO:0043043">
    <property type="term" value="P:peptide biosynthetic process"/>
    <property type="evidence" value="ECO:0007669"/>
    <property type="project" value="InterPro"/>
</dbReference>
<dbReference type="CDD" id="cd04470">
    <property type="entry name" value="S1_EF-P_repeat_1"/>
    <property type="match status" value="1"/>
</dbReference>
<dbReference type="CDD" id="cd05794">
    <property type="entry name" value="S1_EF-P_repeat_2"/>
    <property type="match status" value="1"/>
</dbReference>
<dbReference type="FunFam" id="2.30.30.30:FF:000003">
    <property type="entry name" value="Elongation factor P"/>
    <property type="match status" value="1"/>
</dbReference>
<dbReference type="FunFam" id="2.40.50.140:FF:000004">
    <property type="entry name" value="Elongation factor P"/>
    <property type="match status" value="1"/>
</dbReference>
<dbReference type="FunFam" id="2.40.50.140:FF:000009">
    <property type="entry name" value="Elongation factor P"/>
    <property type="match status" value="1"/>
</dbReference>
<dbReference type="Gene3D" id="2.30.30.30">
    <property type="match status" value="1"/>
</dbReference>
<dbReference type="Gene3D" id="2.40.50.140">
    <property type="entry name" value="Nucleic acid-binding proteins"/>
    <property type="match status" value="2"/>
</dbReference>
<dbReference type="HAMAP" id="MF_00141">
    <property type="entry name" value="EF_P"/>
    <property type="match status" value="1"/>
</dbReference>
<dbReference type="InterPro" id="IPR015365">
    <property type="entry name" value="Elong-fact-P_C"/>
</dbReference>
<dbReference type="InterPro" id="IPR012340">
    <property type="entry name" value="NA-bd_OB-fold"/>
</dbReference>
<dbReference type="InterPro" id="IPR014722">
    <property type="entry name" value="Rib_uL2_dom2"/>
</dbReference>
<dbReference type="InterPro" id="IPR020599">
    <property type="entry name" value="Transl_elong_fac_P/YeiP"/>
</dbReference>
<dbReference type="InterPro" id="IPR013185">
    <property type="entry name" value="Transl_elong_KOW-like"/>
</dbReference>
<dbReference type="InterPro" id="IPR001059">
    <property type="entry name" value="Transl_elong_P/YeiP_cen"/>
</dbReference>
<dbReference type="InterPro" id="IPR013852">
    <property type="entry name" value="Transl_elong_P/YeiP_CS"/>
</dbReference>
<dbReference type="InterPro" id="IPR011768">
    <property type="entry name" value="Transl_elongation_fac_P"/>
</dbReference>
<dbReference type="InterPro" id="IPR008991">
    <property type="entry name" value="Translation_prot_SH3-like_sf"/>
</dbReference>
<dbReference type="NCBIfam" id="TIGR00038">
    <property type="entry name" value="efp"/>
    <property type="match status" value="1"/>
</dbReference>
<dbReference type="NCBIfam" id="NF001810">
    <property type="entry name" value="PRK00529.1"/>
    <property type="match status" value="1"/>
</dbReference>
<dbReference type="PANTHER" id="PTHR30053">
    <property type="entry name" value="ELONGATION FACTOR P"/>
    <property type="match status" value="1"/>
</dbReference>
<dbReference type="PANTHER" id="PTHR30053:SF12">
    <property type="entry name" value="ELONGATION FACTOR P (EF-P) FAMILY PROTEIN"/>
    <property type="match status" value="1"/>
</dbReference>
<dbReference type="Pfam" id="PF01132">
    <property type="entry name" value="EFP"/>
    <property type="match status" value="1"/>
</dbReference>
<dbReference type="Pfam" id="PF08207">
    <property type="entry name" value="EFP_N"/>
    <property type="match status" value="1"/>
</dbReference>
<dbReference type="Pfam" id="PF09285">
    <property type="entry name" value="Elong-fact-P_C"/>
    <property type="match status" value="1"/>
</dbReference>
<dbReference type="PIRSF" id="PIRSF005901">
    <property type="entry name" value="EF-P"/>
    <property type="match status" value="1"/>
</dbReference>
<dbReference type="SMART" id="SM01185">
    <property type="entry name" value="EFP"/>
    <property type="match status" value="1"/>
</dbReference>
<dbReference type="SMART" id="SM00841">
    <property type="entry name" value="Elong-fact-P_C"/>
    <property type="match status" value="1"/>
</dbReference>
<dbReference type="SUPFAM" id="SSF50249">
    <property type="entry name" value="Nucleic acid-binding proteins"/>
    <property type="match status" value="2"/>
</dbReference>
<dbReference type="SUPFAM" id="SSF50104">
    <property type="entry name" value="Translation proteins SH3-like domain"/>
    <property type="match status" value="1"/>
</dbReference>
<dbReference type="PROSITE" id="PS01275">
    <property type="entry name" value="EFP"/>
    <property type="match status" value="1"/>
</dbReference>
<gene>
    <name evidence="1" type="primary">efp</name>
    <name type="ordered locus">VC_2660</name>
</gene>
<organism>
    <name type="scientific">Vibrio cholerae serotype O1 (strain ATCC 39315 / El Tor Inaba N16961)</name>
    <dbReference type="NCBI Taxonomy" id="243277"/>
    <lineage>
        <taxon>Bacteria</taxon>
        <taxon>Pseudomonadati</taxon>
        <taxon>Pseudomonadota</taxon>
        <taxon>Gammaproteobacteria</taxon>
        <taxon>Vibrionales</taxon>
        <taxon>Vibrionaceae</taxon>
        <taxon>Vibrio</taxon>
    </lineage>
</organism>
<protein>
    <recommendedName>
        <fullName evidence="1">Elongation factor P</fullName>
        <shortName evidence="1">EF-P</shortName>
    </recommendedName>
</protein>
<sequence length="188" mass="20576">MATVSTNEFKGGLKIMLDNEPCVILENEYVKPGKGQAFNRVRIRKLLTGKVLEKTFKSGDTAEVADVVDIDLDYLYNDGEFYHFMNNSTFEQLAADAKAVGENAKWLVENNTCMLTLWNGNPIAVTPPNFVELEVTETDPGVKGDTQGTGGKPATLSTGAVVRVPLFVQIGEVIKVDTRSAEYVGRVK</sequence>